<evidence type="ECO:0000250" key="1"/>
<evidence type="ECO:0000250" key="2">
    <source>
        <dbReference type="UniProtKB" id="Q9LD14"/>
    </source>
</evidence>
<evidence type="ECO:0000269" key="3">
    <source>
    </source>
</evidence>
<evidence type="ECO:0000305" key="4"/>
<gene>
    <name type="ordered locus">At1g75280</name>
    <name type="ORF">F22H5.17</name>
</gene>
<accession>P52577</accession>
<accession>Q9FRL9</accession>
<proteinExistence type="evidence at transcript level"/>
<dbReference type="EC" id="1.3.1.-"/>
<dbReference type="EMBL" id="Z49777">
    <property type="protein sequence ID" value="CAA89859.1"/>
    <property type="molecule type" value="mRNA"/>
</dbReference>
<dbReference type="EMBL" id="AC025814">
    <property type="protein sequence ID" value="AAG12677.1"/>
    <property type="status" value="ALT_SEQ"/>
    <property type="molecule type" value="Genomic_DNA"/>
</dbReference>
<dbReference type="EMBL" id="CP002684">
    <property type="protein sequence ID" value="AEE35697.1"/>
    <property type="molecule type" value="Genomic_DNA"/>
</dbReference>
<dbReference type="EMBL" id="AY065395">
    <property type="protein sequence ID" value="AAL38836.1"/>
    <property type="molecule type" value="mRNA"/>
</dbReference>
<dbReference type="EMBL" id="AY117175">
    <property type="protein sequence ID" value="AAM51250.1"/>
    <property type="molecule type" value="mRNA"/>
</dbReference>
<dbReference type="EMBL" id="AY084851">
    <property type="protein sequence ID" value="AAM61416.1"/>
    <property type="molecule type" value="mRNA"/>
</dbReference>
<dbReference type="PIR" id="C96783">
    <property type="entry name" value="C96783"/>
</dbReference>
<dbReference type="PIR" id="S57613">
    <property type="entry name" value="S57613"/>
</dbReference>
<dbReference type="RefSeq" id="NP_565107.1">
    <property type="nucleotide sequence ID" value="NM_106183.4"/>
</dbReference>
<dbReference type="SMR" id="P52577"/>
<dbReference type="BioGRID" id="29084">
    <property type="interactions" value="1"/>
</dbReference>
<dbReference type="FunCoup" id="P52577">
    <property type="interactions" value="79"/>
</dbReference>
<dbReference type="STRING" id="3702.P52577"/>
<dbReference type="iPTMnet" id="P52577"/>
<dbReference type="PaxDb" id="3702-AT1G75280.1"/>
<dbReference type="ProteomicsDB" id="228737"/>
<dbReference type="EnsemblPlants" id="AT1G75280.1">
    <property type="protein sequence ID" value="AT1G75280.1"/>
    <property type="gene ID" value="AT1G75280"/>
</dbReference>
<dbReference type="GeneID" id="843865"/>
<dbReference type="Gramene" id="AT1G75280.1">
    <property type="protein sequence ID" value="AT1G75280.1"/>
    <property type="gene ID" value="AT1G75280"/>
</dbReference>
<dbReference type="KEGG" id="ath:AT1G75280"/>
<dbReference type="Araport" id="AT1G75280"/>
<dbReference type="TAIR" id="AT1G75280"/>
<dbReference type="eggNOG" id="ENOG502QPMY">
    <property type="taxonomic scope" value="Eukaryota"/>
</dbReference>
<dbReference type="HOGENOM" id="CLU_060833_0_1_1"/>
<dbReference type="InParanoid" id="P52577"/>
<dbReference type="OMA" id="DYWMSWG"/>
<dbReference type="OrthoDB" id="419598at2759"/>
<dbReference type="PhylomeDB" id="P52577"/>
<dbReference type="PRO" id="PR:P52577"/>
<dbReference type="Proteomes" id="UP000006548">
    <property type="component" value="Chromosome 1"/>
</dbReference>
<dbReference type="ExpressionAtlas" id="P52577">
    <property type="expression patterns" value="baseline and differential"/>
</dbReference>
<dbReference type="GO" id="GO:0005829">
    <property type="term" value="C:cytosol"/>
    <property type="evidence" value="ECO:0007005"/>
    <property type="project" value="TAIR"/>
</dbReference>
<dbReference type="GO" id="GO:0005739">
    <property type="term" value="C:mitochondrion"/>
    <property type="evidence" value="ECO:0007005"/>
    <property type="project" value="TAIR"/>
</dbReference>
<dbReference type="GO" id="GO:0005886">
    <property type="term" value="C:plasma membrane"/>
    <property type="evidence" value="ECO:0007005"/>
    <property type="project" value="TAIR"/>
</dbReference>
<dbReference type="GO" id="GO:0016491">
    <property type="term" value="F:oxidoreductase activity"/>
    <property type="evidence" value="ECO:0007669"/>
    <property type="project" value="UniProtKB-KW"/>
</dbReference>
<dbReference type="GO" id="GO:0006979">
    <property type="term" value="P:response to oxidative stress"/>
    <property type="evidence" value="ECO:0000270"/>
    <property type="project" value="TAIR"/>
</dbReference>
<dbReference type="CDD" id="cd05259">
    <property type="entry name" value="PCBER_SDR_a"/>
    <property type="match status" value="1"/>
</dbReference>
<dbReference type="Gene3D" id="3.40.50.720">
    <property type="entry name" value="NAD(P)-binding Rossmann-like Domain"/>
    <property type="match status" value="1"/>
</dbReference>
<dbReference type="Gene3D" id="3.90.25.10">
    <property type="entry name" value="UDP-galactose 4-epimerase, domain 1"/>
    <property type="match status" value="1"/>
</dbReference>
<dbReference type="InterPro" id="IPR036291">
    <property type="entry name" value="NAD(P)-bd_dom_sf"/>
</dbReference>
<dbReference type="InterPro" id="IPR008030">
    <property type="entry name" value="NmrA-like"/>
</dbReference>
<dbReference type="InterPro" id="IPR050608">
    <property type="entry name" value="NmrA-type/Isoflavone_red_sf"/>
</dbReference>
<dbReference type="InterPro" id="IPR045312">
    <property type="entry name" value="PCBER-like"/>
</dbReference>
<dbReference type="PANTHER" id="PTHR43349:SF93">
    <property type="entry name" value="ISOFLAVONE REDUCTASE HOMOLOG P3-RELATED"/>
    <property type="match status" value="1"/>
</dbReference>
<dbReference type="PANTHER" id="PTHR43349">
    <property type="entry name" value="PINORESINOL REDUCTASE-RELATED"/>
    <property type="match status" value="1"/>
</dbReference>
<dbReference type="Pfam" id="PF05368">
    <property type="entry name" value="NmrA"/>
    <property type="match status" value="1"/>
</dbReference>
<dbReference type="SUPFAM" id="SSF51735">
    <property type="entry name" value="NAD(P)-binding Rossmann-fold domains"/>
    <property type="match status" value="1"/>
</dbReference>
<name>IFRH_ARATH</name>
<keyword id="KW-0963">Cytoplasm</keyword>
<keyword id="KW-0521">NADP</keyword>
<keyword id="KW-0560">Oxidoreductase</keyword>
<keyword id="KW-1185">Reference proteome</keyword>
<protein>
    <recommendedName>
        <fullName>Isoflavone reductase homolog P3</fullName>
        <ecNumber>1.3.1.-</ecNumber>
    </recommendedName>
</protein>
<organism>
    <name type="scientific">Arabidopsis thaliana</name>
    <name type="common">Mouse-ear cress</name>
    <dbReference type="NCBI Taxonomy" id="3702"/>
    <lineage>
        <taxon>Eukaryota</taxon>
        <taxon>Viridiplantae</taxon>
        <taxon>Streptophyta</taxon>
        <taxon>Embryophyta</taxon>
        <taxon>Tracheophyta</taxon>
        <taxon>Spermatophyta</taxon>
        <taxon>Magnoliopsida</taxon>
        <taxon>eudicotyledons</taxon>
        <taxon>Gunneridae</taxon>
        <taxon>Pentapetalae</taxon>
        <taxon>rosids</taxon>
        <taxon>malvids</taxon>
        <taxon>Brassicales</taxon>
        <taxon>Brassicaceae</taxon>
        <taxon>Camelineae</taxon>
        <taxon>Arabidopsis</taxon>
    </lineage>
</organism>
<sequence>MATEKSKILVIGGTGYIGKFLVEASAKAGHSTFALVREATLSDPVKGKTVQSFKDLGVTILHGDLNDHESLVKAIKQVDVVISTVGSMQILDQTKIISAIKEAGNVKRFLPSEFGVDVDRTSAVEPAKSAFAGKIQIRRTIEAEGIPYTYAVTGCFGGYYLPTLVQFEPGLTSPPRDKVTILGDGNAKAVINKEEDIAAYTIKAVDDPRTLNKILYIKPSNNTLSMNEIVTLWEKKIGKSLEKTHLPEEQLLKSIQESPIPINVVLSINHAVFVNGDTNISIEPSFGVEASELYPDVKYTSVDEYLSYFA</sequence>
<feature type="chain" id="PRO_0000204548" description="Isoflavone reductase homolog P3">
    <location>
        <begin position="1"/>
        <end position="310"/>
    </location>
</feature>
<feature type="active site" description="Proton acceptor" evidence="2">
    <location>
        <position position="134"/>
    </location>
</feature>
<feature type="binding site" evidence="2">
    <location>
        <begin position="12"/>
        <end position="18"/>
    </location>
    <ligand>
        <name>NADP(+)</name>
        <dbReference type="ChEBI" id="CHEBI:58349"/>
    </ligand>
</feature>
<feature type="binding site" evidence="2">
    <location>
        <position position="37"/>
    </location>
    <ligand>
        <name>NADP(+)</name>
        <dbReference type="ChEBI" id="CHEBI:58349"/>
    </ligand>
</feature>
<feature type="binding site" evidence="2">
    <location>
        <position position="46"/>
    </location>
    <ligand>
        <name>NADP(+)</name>
        <dbReference type="ChEBI" id="CHEBI:58349"/>
    </ligand>
</feature>
<feature type="binding site" evidence="2">
    <location>
        <position position="138"/>
    </location>
    <ligand>
        <name>NADP(+)</name>
        <dbReference type="ChEBI" id="CHEBI:58349"/>
    </ligand>
</feature>
<reference key="1">
    <citation type="journal article" date="1995" name="J. Biol. Chem.">
        <title>Arabidopsis thaliana NADPH oxidoreductase homologs confer tolerance of yeasts toward the thiol-oxidizing drug diamide.</title>
        <authorList>
            <person name="Babiychuk E."/>
            <person name="Kushnir S."/>
            <person name="Belles-Boix E."/>
            <person name="van Montagu M."/>
            <person name="Inze D."/>
        </authorList>
    </citation>
    <scope>NUCLEOTIDE SEQUENCE [MRNA]</scope>
    <source>
        <strain>cv. Columbia</strain>
    </source>
</reference>
<reference key="2">
    <citation type="journal article" date="2000" name="Nature">
        <title>Sequence and analysis of chromosome 1 of the plant Arabidopsis thaliana.</title>
        <authorList>
            <person name="Theologis A."/>
            <person name="Ecker J.R."/>
            <person name="Palm C.J."/>
            <person name="Federspiel N.A."/>
            <person name="Kaul S."/>
            <person name="White O."/>
            <person name="Alonso J."/>
            <person name="Altafi H."/>
            <person name="Araujo R."/>
            <person name="Bowman C.L."/>
            <person name="Brooks S.Y."/>
            <person name="Buehler E."/>
            <person name="Chan A."/>
            <person name="Chao Q."/>
            <person name="Chen H."/>
            <person name="Cheuk R.F."/>
            <person name="Chin C.W."/>
            <person name="Chung M.K."/>
            <person name="Conn L."/>
            <person name="Conway A.B."/>
            <person name="Conway A.R."/>
            <person name="Creasy T.H."/>
            <person name="Dewar K."/>
            <person name="Dunn P."/>
            <person name="Etgu P."/>
            <person name="Feldblyum T.V."/>
            <person name="Feng J.-D."/>
            <person name="Fong B."/>
            <person name="Fujii C.Y."/>
            <person name="Gill J.E."/>
            <person name="Goldsmith A.D."/>
            <person name="Haas B."/>
            <person name="Hansen N.F."/>
            <person name="Hughes B."/>
            <person name="Huizar L."/>
            <person name="Hunter J.L."/>
            <person name="Jenkins J."/>
            <person name="Johnson-Hopson C."/>
            <person name="Khan S."/>
            <person name="Khaykin E."/>
            <person name="Kim C.J."/>
            <person name="Koo H.L."/>
            <person name="Kremenetskaia I."/>
            <person name="Kurtz D.B."/>
            <person name="Kwan A."/>
            <person name="Lam B."/>
            <person name="Langin-Hooper S."/>
            <person name="Lee A."/>
            <person name="Lee J.M."/>
            <person name="Lenz C.A."/>
            <person name="Li J.H."/>
            <person name="Li Y.-P."/>
            <person name="Lin X."/>
            <person name="Liu S.X."/>
            <person name="Liu Z.A."/>
            <person name="Luros J.S."/>
            <person name="Maiti R."/>
            <person name="Marziali A."/>
            <person name="Militscher J."/>
            <person name="Miranda M."/>
            <person name="Nguyen M."/>
            <person name="Nierman W.C."/>
            <person name="Osborne B.I."/>
            <person name="Pai G."/>
            <person name="Peterson J."/>
            <person name="Pham P.K."/>
            <person name="Rizzo M."/>
            <person name="Rooney T."/>
            <person name="Rowley D."/>
            <person name="Sakano H."/>
            <person name="Salzberg S.L."/>
            <person name="Schwartz J.R."/>
            <person name="Shinn P."/>
            <person name="Southwick A.M."/>
            <person name="Sun H."/>
            <person name="Tallon L.J."/>
            <person name="Tambunga G."/>
            <person name="Toriumi M.J."/>
            <person name="Town C.D."/>
            <person name="Utterback T."/>
            <person name="Van Aken S."/>
            <person name="Vaysberg M."/>
            <person name="Vysotskaia V.S."/>
            <person name="Walker M."/>
            <person name="Wu D."/>
            <person name="Yu G."/>
            <person name="Fraser C.M."/>
            <person name="Venter J.C."/>
            <person name="Davis R.W."/>
        </authorList>
    </citation>
    <scope>NUCLEOTIDE SEQUENCE [LARGE SCALE GENOMIC DNA]</scope>
    <source>
        <strain>cv. Columbia</strain>
    </source>
</reference>
<reference key="3">
    <citation type="journal article" date="2017" name="Plant J.">
        <title>Araport11: a complete reannotation of the Arabidopsis thaliana reference genome.</title>
        <authorList>
            <person name="Cheng C.Y."/>
            <person name="Krishnakumar V."/>
            <person name="Chan A.P."/>
            <person name="Thibaud-Nissen F."/>
            <person name="Schobel S."/>
            <person name="Town C.D."/>
        </authorList>
    </citation>
    <scope>GENOME REANNOTATION</scope>
    <source>
        <strain>cv. Columbia</strain>
    </source>
</reference>
<reference key="4">
    <citation type="journal article" date="2003" name="Science">
        <title>Empirical analysis of transcriptional activity in the Arabidopsis genome.</title>
        <authorList>
            <person name="Yamada K."/>
            <person name="Lim J."/>
            <person name="Dale J.M."/>
            <person name="Chen H."/>
            <person name="Shinn P."/>
            <person name="Palm C.J."/>
            <person name="Southwick A.M."/>
            <person name="Wu H.C."/>
            <person name="Kim C.J."/>
            <person name="Nguyen M."/>
            <person name="Pham P.K."/>
            <person name="Cheuk R.F."/>
            <person name="Karlin-Newmann G."/>
            <person name="Liu S.X."/>
            <person name="Lam B."/>
            <person name="Sakano H."/>
            <person name="Wu T."/>
            <person name="Yu G."/>
            <person name="Miranda M."/>
            <person name="Quach H.L."/>
            <person name="Tripp M."/>
            <person name="Chang C.H."/>
            <person name="Lee J.M."/>
            <person name="Toriumi M.J."/>
            <person name="Chan M.M."/>
            <person name="Tang C.C."/>
            <person name="Onodera C.S."/>
            <person name="Deng J.M."/>
            <person name="Akiyama K."/>
            <person name="Ansari Y."/>
            <person name="Arakawa T."/>
            <person name="Banh J."/>
            <person name="Banno F."/>
            <person name="Bowser L."/>
            <person name="Brooks S.Y."/>
            <person name="Carninci P."/>
            <person name="Chao Q."/>
            <person name="Choy N."/>
            <person name="Enju A."/>
            <person name="Goldsmith A.D."/>
            <person name="Gurjal M."/>
            <person name="Hansen N.F."/>
            <person name="Hayashizaki Y."/>
            <person name="Johnson-Hopson C."/>
            <person name="Hsuan V.W."/>
            <person name="Iida K."/>
            <person name="Karnes M."/>
            <person name="Khan S."/>
            <person name="Koesema E."/>
            <person name="Ishida J."/>
            <person name="Jiang P.X."/>
            <person name="Jones T."/>
            <person name="Kawai J."/>
            <person name="Kamiya A."/>
            <person name="Meyers C."/>
            <person name="Nakajima M."/>
            <person name="Narusaka M."/>
            <person name="Seki M."/>
            <person name="Sakurai T."/>
            <person name="Satou M."/>
            <person name="Tamse R."/>
            <person name="Vaysberg M."/>
            <person name="Wallender E.K."/>
            <person name="Wong C."/>
            <person name="Yamamura Y."/>
            <person name="Yuan S."/>
            <person name="Shinozaki K."/>
            <person name="Davis R.W."/>
            <person name="Theologis A."/>
            <person name="Ecker J.R."/>
        </authorList>
    </citation>
    <scope>NUCLEOTIDE SEQUENCE [LARGE SCALE MRNA]</scope>
    <source>
        <strain>cv. Columbia</strain>
    </source>
</reference>
<reference key="5">
    <citation type="submission" date="2002-03" db="EMBL/GenBank/DDBJ databases">
        <title>Full-length cDNA from Arabidopsis thaliana.</title>
        <authorList>
            <person name="Brover V.V."/>
            <person name="Troukhan M.E."/>
            <person name="Alexandrov N.A."/>
            <person name="Lu Y.-P."/>
            <person name="Flavell R.B."/>
            <person name="Feldmann K.A."/>
        </authorList>
    </citation>
    <scope>NUCLEOTIDE SEQUENCE [LARGE SCALE MRNA]</scope>
</reference>
<reference key="6">
    <citation type="journal article" date="2006" name="Proteomics">
        <title>The early responses of Arabidopsis thaliana cells to cadmium exposure explored by protein and metabolite profiling analyses.</title>
        <authorList>
            <person name="Sarry J.-E."/>
            <person name="Kuhn L."/>
            <person name="Ducruix C."/>
            <person name="Lafaye A."/>
            <person name="Junot C."/>
            <person name="Hugouvieux V."/>
            <person name="Jourdain A."/>
            <person name="Bastien O."/>
            <person name="Fievet J.B."/>
            <person name="Vailhen D."/>
            <person name="Amekraz B."/>
            <person name="Moulin C."/>
            <person name="Ezan E."/>
            <person name="Garin J."/>
            <person name="Bourguignon J."/>
        </authorList>
    </citation>
    <scope>INDUCTION BY CADMIUM</scope>
    <source>
        <strain>cv. Columbia</strain>
    </source>
</reference>
<comment type="subcellular location">
    <subcellularLocation>
        <location evidence="1">Cytoplasm</location>
    </subcellularLocation>
</comment>
<comment type="induction">
    <text evidence="3">Induced by cadmium.</text>
</comment>
<comment type="similarity">
    <text evidence="4">Belongs to the NmrA-type oxidoreductase family. Isoflavone reductase subfamily.</text>
</comment>
<comment type="sequence caution" evidence="4">
    <conflict type="erroneous gene model prediction">
        <sequence resource="EMBL-CDS" id="AAG12677"/>
    </conflict>
</comment>